<feature type="chain" id="PRO_0000103288" description="Branched-chain-amino-acid transaminase 1">
    <location>
        <begin position="1"/>
        <end position="356"/>
    </location>
</feature>
<feature type="modified residue" description="N6-(pyridoxal phosphate)lysine" evidence="1">
    <location>
        <position position="197"/>
    </location>
</feature>
<gene>
    <name type="primary">ilvE</name>
    <name type="synonym">ybgE</name>
    <name type="ordered locus">BSU02390</name>
</gene>
<protein>
    <recommendedName>
        <fullName>Branched-chain-amino-acid transaminase 1</fullName>
        <shortName>BCAT 1</shortName>
        <ecNumber>2.6.1.42</ecNumber>
    </recommendedName>
</protein>
<dbReference type="EC" id="2.6.1.42"/>
<dbReference type="EMBL" id="AB006424">
    <property type="protein sequence ID" value="BAA33137.1"/>
    <property type="molecule type" value="Genomic_DNA"/>
</dbReference>
<dbReference type="EMBL" id="AL009126">
    <property type="protein sequence ID" value="CAB12033.1"/>
    <property type="molecule type" value="Genomic_DNA"/>
</dbReference>
<dbReference type="PIR" id="H69750">
    <property type="entry name" value="H69750"/>
</dbReference>
<dbReference type="RefSeq" id="NP_388121.1">
    <property type="nucleotide sequence ID" value="NC_000964.3"/>
</dbReference>
<dbReference type="RefSeq" id="WP_003246499.1">
    <property type="nucleotide sequence ID" value="NZ_OZ025638.1"/>
</dbReference>
<dbReference type="SMR" id="O31461"/>
<dbReference type="FunCoup" id="O31461">
    <property type="interactions" value="552"/>
</dbReference>
<dbReference type="STRING" id="224308.BSU02390"/>
<dbReference type="PaxDb" id="224308-BSU02390"/>
<dbReference type="EnsemblBacteria" id="CAB12033">
    <property type="protein sequence ID" value="CAB12033"/>
    <property type="gene ID" value="BSU_02390"/>
</dbReference>
<dbReference type="GeneID" id="938420"/>
<dbReference type="KEGG" id="bsu:BSU02390"/>
<dbReference type="PATRIC" id="fig|224308.179.peg.245"/>
<dbReference type="eggNOG" id="COG0115">
    <property type="taxonomic scope" value="Bacteria"/>
</dbReference>
<dbReference type="InParanoid" id="O31461"/>
<dbReference type="OrthoDB" id="9804984at2"/>
<dbReference type="PhylomeDB" id="O31461"/>
<dbReference type="BioCyc" id="BSUB:BSU02390-MONOMER"/>
<dbReference type="BioCyc" id="MetaCyc:BSU02390-MONOMER"/>
<dbReference type="SABIO-RK" id="O31461"/>
<dbReference type="UniPathway" id="UPA00047">
    <property type="reaction ID" value="UER00058"/>
</dbReference>
<dbReference type="UniPathway" id="UPA00048">
    <property type="reaction ID" value="UER00073"/>
</dbReference>
<dbReference type="UniPathway" id="UPA00049">
    <property type="reaction ID" value="UER00062"/>
</dbReference>
<dbReference type="Proteomes" id="UP000001570">
    <property type="component" value="Chromosome"/>
</dbReference>
<dbReference type="GO" id="GO:0052656">
    <property type="term" value="F:L-isoleucine-2-oxoglutarate transaminase activity"/>
    <property type="evidence" value="ECO:0007669"/>
    <property type="project" value="RHEA"/>
</dbReference>
<dbReference type="GO" id="GO:0052654">
    <property type="term" value="F:L-leucine-2-oxoglutarate transaminase activity"/>
    <property type="evidence" value="ECO:0007669"/>
    <property type="project" value="RHEA"/>
</dbReference>
<dbReference type="GO" id="GO:0052655">
    <property type="term" value="F:L-valine-2-oxoglutarate transaminase activity"/>
    <property type="evidence" value="ECO:0007669"/>
    <property type="project" value="RHEA"/>
</dbReference>
<dbReference type="GO" id="GO:0009097">
    <property type="term" value="P:isoleucine biosynthetic process"/>
    <property type="evidence" value="ECO:0007669"/>
    <property type="project" value="UniProtKB-UniPathway"/>
</dbReference>
<dbReference type="GO" id="GO:0009098">
    <property type="term" value="P:L-leucine biosynthetic process"/>
    <property type="evidence" value="ECO:0007669"/>
    <property type="project" value="UniProtKB-UniPathway"/>
</dbReference>
<dbReference type="GO" id="GO:0009099">
    <property type="term" value="P:L-valine biosynthetic process"/>
    <property type="evidence" value="ECO:0007669"/>
    <property type="project" value="UniProtKB-UniPathway"/>
</dbReference>
<dbReference type="CDD" id="cd01557">
    <property type="entry name" value="BCAT_beta_family"/>
    <property type="match status" value="1"/>
</dbReference>
<dbReference type="Gene3D" id="3.30.470.10">
    <property type="match status" value="1"/>
</dbReference>
<dbReference type="Gene3D" id="3.20.10.10">
    <property type="entry name" value="D-amino Acid Aminotransferase, subunit A, domain 2"/>
    <property type="match status" value="1"/>
</dbReference>
<dbReference type="InterPro" id="IPR001544">
    <property type="entry name" value="Aminotrans_IV"/>
</dbReference>
<dbReference type="InterPro" id="IPR018300">
    <property type="entry name" value="Aminotrans_IV_CS"/>
</dbReference>
<dbReference type="InterPro" id="IPR036038">
    <property type="entry name" value="Aminotransferase-like"/>
</dbReference>
<dbReference type="InterPro" id="IPR005786">
    <property type="entry name" value="B_amino_transII"/>
</dbReference>
<dbReference type="InterPro" id="IPR043132">
    <property type="entry name" value="BCAT-like_C"/>
</dbReference>
<dbReference type="InterPro" id="IPR043131">
    <property type="entry name" value="BCAT-like_N"/>
</dbReference>
<dbReference type="InterPro" id="IPR033939">
    <property type="entry name" value="BCAT_family"/>
</dbReference>
<dbReference type="NCBIfam" id="TIGR01123">
    <property type="entry name" value="ilvE_II"/>
    <property type="match status" value="1"/>
</dbReference>
<dbReference type="NCBIfam" id="NF009897">
    <property type="entry name" value="PRK13357.1"/>
    <property type="match status" value="1"/>
</dbReference>
<dbReference type="PANTHER" id="PTHR11825:SF44">
    <property type="entry name" value="BRANCHED-CHAIN-AMINO-ACID AMINOTRANSFERASE"/>
    <property type="match status" value="1"/>
</dbReference>
<dbReference type="PANTHER" id="PTHR11825">
    <property type="entry name" value="SUBGROUP IIII AMINOTRANSFERASE"/>
    <property type="match status" value="1"/>
</dbReference>
<dbReference type="Pfam" id="PF01063">
    <property type="entry name" value="Aminotran_4"/>
    <property type="match status" value="1"/>
</dbReference>
<dbReference type="PIRSF" id="PIRSF006468">
    <property type="entry name" value="BCAT1"/>
    <property type="match status" value="1"/>
</dbReference>
<dbReference type="SUPFAM" id="SSF56752">
    <property type="entry name" value="D-aminoacid aminotransferase-like PLP-dependent enzymes"/>
    <property type="match status" value="1"/>
</dbReference>
<dbReference type="PROSITE" id="PS00770">
    <property type="entry name" value="AA_TRANSFER_CLASS_4"/>
    <property type="match status" value="1"/>
</dbReference>
<keyword id="KW-0028">Amino-acid biosynthesis</keyword>
<keyword id="KW-0032">Aminotransferase</keyword>
<keyword id="KW-0100">Branched-chain amino acid biosynthesis</keyword>
<keyword id="KW-0663">Pyridoxal phosphate</keyword>
<keyword id="KW-1185">Reference proteome</keyword>
<keyword id="KW-0808">Transferase</keyword>
<name>ILVE1_BACSU</name>
<reference key="1">
    <citation type="submission" date="1997-07" db="EMBL/GenBank/DDBJ databases">
        <title>Sequence analysis of the 70kb region between 17 and 23 degree of the Bacillus subtilis chromosome.</title>
        <authorList>
            <person name="Haga K."/>
            <person name="Liu H."/>
            <person name="Yasumoto K."/>
            <person name="Takahashi H."/>
            <person name="Yoshikawa H."/>
        </authorList>
    </citation>
    <scope>NUCLEOTIDE SEQUENCE [GENOMIC DNA]</scope>
    <source>
        <strain>168</strain>
    </source>
</reference>
<reference key="2">
    <citation type="journal article" date="1997" name="Nature">
        <title>The complete genome sequence of the Gram-positive bacterium Bacillus subtilis.</title>
        <authorList>
            <person name="Kunst F."/>
            <person name="Ogasawara N."/>
            <person name="Moszer I."/>
            <person name="Albertini A.M."/>
            <person name="Alloni G."/>
            <person name="Azevedo V."/>
            <person name="Bertero M.G."/>
            <person name="Bessieres P."/>
            <person name="Bolotin A."/>
            <person name="Borchert S."/>
            <person name="Borriss R."/>
            <person name="Boursier L."/>
            <person name="Brans A."/>
            <person name="Braun M."/>
            <person name="Brignell S.C."/>
            <person name="Bron S."/>
            <person name="Brouillet S."/>
            <person name="Bruschi C.V."/>
            <person name="Caldwell B."/>
            <person name="Capuano V."/>
            <person name="Carter N.M."/>
            <person name="Choi S.-K."/>
            <person name="Codani J.-J."/>
            <person name="Connerton I.F."/>
            <person name="Cummings N.J."/>
            <person name="Daniel R.A."/>
            <person name="Denizot F."/>
            <person name="Devine K.M."/>
            <person name="Duesterhoeft A."/>
            <person name="Ehrlich S.D."/>
            <person name="Emmerson P.T."/>
            <person name="Entian K.-D."/>
            <person name="Errington J."/>
            <person name="Fabret C."/>
            <person name="Ferrari E."/>
            <person name="Foulger D."/>
            <person name="Fritz C."/>
            <person name="Fujita M."/>
            <person name="Fujita Y."/>
            <person name="Fuma S."/>
            <person name="Galizzi A."/>
            <person name="Galleron N."/>
            <person name="Ghim S.-Y."/>
            <person name="Glaser P."/>
            <person name="Goffeau A."/>
            <person name="Golightly E.J."/>
            <person name="Grandi G."/>
            <person name="Guiseppi G."/>
            <person name="Guy B.J."/>
            <person name="Haga K."/>
            <person name="Haiech J."/>
            <person name="Harwood C.R."/>
            <person name="Henaut A."/>
            <person name="Hilbert H."/>
            <person name="Holsappel S."/>
            <person name="Hosono S."/>
            <person name="Hullo M.-F."/>
            <person name="Itaya M."/>
            <person name="Jones L.-M."/>
            <person name="Joris B."/>
            <person name="Karamata D."/>
            <person name="Kasahara Y."/>
            <person name="Klaerr-Blanchard M."/>
            <person name="Klein C."/>
            <person name="Kobayashi Y."/>
            <person name="Koetter P."/>
            <person name="Koningstein G."/>
            <person name="Krogh S."/>
            <person name="Kumano M."/>
            <person name="Kurita K."/>
            <person name="Lapidus A."/>
            <person name="Lardinois S."/>
            <person name="Lauber J."/>
            <person name="Lazarevic V."/>
            <person name="Lee S.-M."/>
            <person name="Levine A."/>
            <person name="Liu H."/>
            <person name="Masuda S."/>
            <person name="Mauel C."/>
            <person name="Medigue C."/>
            <person name="Medina N."/>
            <person name="Mellado R.P."/>
            <person name="Mizuno M."/>
            <person name="Moestl D."/>
            <person name="Nakai S."/>
            <person name="Noback M."/>
            <person name="Noone D."/>
            <person name="O'Reilly M."/>
            <person name="Ogawa K."/>
            <person name="Ogiwara A."/>
            <person name="Oudega B."/>
            <person name="Park S.-H."/>
            <person name="Parro V."/>
            <person name="Pohl T.M."/>
            <person name="Portetelle D."/>
            <person name="Porwollik S."/>
            <person name="Prescott A.M."/>
            <person name="Presecan E."/>
            <person name="Pujic P."/>
            <person name="Purnelle B."/>
            <person name="Rapoport G."/>
            <person name="Rey M."/>
            <person name="Reynolds S."/>
            <person name="Rieger M."/>
            <person name="Rivolta C."/>
            <person name="Rocha E."/>
            <person name="Roche B."/>
            <person name="Rose M."/>
            <person name="Sadaie Y."/>
            <person name="Sato T."/>
            <person name="Scanlan E."/>
            <person name="Schleich S."/>
            <person name="Schroeter R."/>
            <person name="Scoffone F."/>
            <person name="Sekiguchi J."/>
            <person name="Sekowska A."/>
            <person name="Seror S.J."/>
            <person name="Serror P."/>
            <person name="Shin B.-S."/>
            <person name="Soldo B."/>
            <person name="Sorokin A."/>
            <person name="Tacconi E."/>
            <person name="Takagi T."/>
            <person name="Takahashi H."/>
            <person name="Takemaru K."/>
            <person name="Takeuchi M."/>
            <person name="Tamakoshi A."/>
            <person name="Tanaka T."/>
            <person name="Terpstra P."/>
            <person name="Tognoni A."/>
            <person name="Tosato V."/>
            <person name="Uchiyama S."/>
            <person name="Vandenbol M."/>
            <person name="Vannier F."/>
            <person name="Vassarotti A."/>
            <person name="Viari A."/>
            <person name="Wambutt R."/>
            <person name="Wedler E."/>
            <person name="Wedler H."/>
            <person name="Weitzenegger T."/>
            <person name="Winters P."/>
            <person name="Wipat A."/>
            <person name="Yamamoto H."/>
            <person name="Yamane K."/>
            <person name="Yasumoto K."/>
            <person name="Yata K."/>
            <person name="Yoshida K."/>
            <person name="Yoshikawa H.-F."/>
            <person name="Zumstein E."/>
            <person name="Yoshikawa H."/>
            <person name="Danchin A."/>
        </authorList>
    </citation>
    <scope>NUCLEOTIDE SEQUENCE [LARGE SCALE GENOMIC DNA]</scope>
    <source>
        <strain>168</strain>
    </source>
</reference>
<reference key="3">
    <citation type="journal article" date="2003" name="J. Bacteriol.">
        <title>Methionine regeneration and aminotransferases in Bacillus subtilis, Bacillus cereus, and Bacillus anthracis.</title>
        <authorList>
            <person name="Berger B.J."/>
            <person name="English S."/>
            <person name="Chan G."/>
            <person name="Knodel M.H."/>
        </authorList>
    </citation>
    <scope>FUNCTION</scope>
    <scope>ACTIVITY REGULATION</scope>
    <scope>BIOPHYSICOCHEMICAL PROPERTIES</scope>
</reference>
<sequence>MNKLIEREKTVYYKEKPDPSSLGFGQYFTDYMFVMDYEEGIGWHHPRIAPYAPLTLDPSSSVFHYGQAVFEGLKAYRTDDGRVLLFRPDQNIKRLNRSCERMSMPPLDEELVLEALTQLVELEKDWVPKEKGTSLYIRPFVIATEPSLGVKASRSYTFMIVLSPVGSYYGDDQLKPVRIYVEDEYVRAVNGGVGFAKTAGNYAASLQAQRKANELGYDQVLWLDAIEKKYVEEVGSMNIFFVINGEAVTPALSGSILSGVTRASAIELIRSWGIPVREERISIDEVYAASARGELTEVFGTGTAAVVTPVGELNIHGKTVIVGDGQIGDLSKKLYETITDIQLGKVKGPFNWTVEV</sequence>
<evidence type="ECO:0000250" key="1"/>
<evidence type="ECO:0000269" key="2">
    <source>
    </source>
</evidence>
<evidence type="ECO:0000305" key="3"/>
<accession>O31461</accession>
<proteinExistence type="evidence at protein level"/>
<organism>
    <name type="scientific">Bacillus subtilis (strain 168)</name>
    <dbReference type="NCBI Taxonomy" id="224308"/>
    <lineage>
        <taxon>Bacteria</taxon>
        <taxon>Bacillati</taxon>
        <taxon>Bacillota</taxon>
        <taxon>Bacilli</taxon>
        <taxon>Bacillales</taxon>
        <taxon>Bacillaceae</taxon>
        <taxon>Bacillus</taxon>
    </lineage>
</organism>
<comment type="function">
    <text evidence="2">Transaminates branched-chain amino acids and ketoglutarate. Involved in the final step of the methionine regeneration pathway, where ketomethiobutyrate (KMTB) is converted to methionine via a transamination. The amino donor preference is isoleucine, leucine, valine, phenylalanine, and tyrosine.</text>
</comment>
<comment type="catalytic activity">
    <reaction>
        <text>L-leucine + 2-oxoglutarate = 4-methyl-2-oxopentanoate + L-glutamate</text>
        <dbReference type="Rhea" id="RHEA:18321"/>
        <dbReference type="ChEBI" id="CHEBI:16810"/>
        <dbReference type="ChEBI" id="CHEBI:17865"/>
        <dbReference type="ChEBI" id="CHEBI:29985"/>
        <dbReference type="ChEBI" id="CHEBI:57427"/>
        <dbReference type="EC" id="2.6.1.42"/>
    </reaction>
</comment>
<comment type="catalytic activity">
    <reaction>
        <text>L-isoleucine + 2-oxoglutarate = (S)-3-methyl-2-oxopentanoate + L-glutamate</text>
        <dbReference type="Rhea" id="RHEA:24801"/>
        <dbReference type="ChEBI" id="CHEBI:16810"/>
        <dbReference type="ChEBI" id="CHEBI:29985"/>
        <dbReference type="ChEBI" id="CHEBI:35146"/>
        <dbReference type="ChEBI" id="CHEBI:58045"/>
        <dbReference type="EC" id="2.6.1.42"/>
    </reaction>
</comment>
<comment type="catalytic activity">
    <reaction>
        <text>L-valine + 2-oxoglutarate = 3-methyl-2-oxobutanoate + L-glutamate</text>
        <dbReference type="Rhea" id="RHEA:24813"/>
        <dbReference type="ChEBI" id="CHEBI:11851"/>
        <dbReference type="ChEBI" id="CHEBI:16810"/>
        <dbReference type="ChEBI" id="CHEBI:29985"/>
        <dbReference type="ChEBI" id="CHEBI:57762"/>
        <dbReference type="EC" id="2.6.1.42"/>
    </reaction>
</comment>
<comment type="cofactor">
    <cofactor>
        <name>pyridoxal 5'-phosphate</name>
        <dbReference type="ChEBI" id="CHEBI:597326"/>
    </cofactor>
</comment>
<comment type="activity regulation">
    <text evidence="2">Inhibited by canaline.</text>
</comment>
<comment type="biophysicochemical properties">
    <kinetics>
        <KM evidence="2">2.36 mM for isoleucine (with 10 mM ketomethiobutyrate)</KM>
        <KM evidence="2">2.78 mM for leucine (with 10 mM ketomethiobutyrate)</KM>
        <KM evidence="2">2.82 mM for valine (with 10 mM alpha-ketoglutarate)</KM>
        <KM evidence="2">3.15 mM for isoleucine (with 10 mM alpha-ketoglutarate)</KM>
        <KM evidence="2">3.2 mM for valine (with 10 mM ketomethiobutyrate)</KM>
        <KM evidence="2">3.99 mM for leucine (with 10 mM alpha-ketoglutarate)</KM>
        <Vmax evidence="2">1.84 umol/min/mg enzyme toward isoleucine (with 10 mM ketomethiobutyrate)</Vmax>
        <Vmax evidence="2">1.87 umol/min/mg enzyme toward leucine (with 10 mM ketomethiobutyrate)</Vmax>
        <Vmax evidence="2">2.03 umol/min/mg enzyme toward valine (with 10 mM ketomethiobutyrate)</Vmax>
        <Vmax evidence="2">13.93 umol/min/mg enzyme toward valine (with 10 mM alpha-ketoglutarate)</Vmax>
        <Vmax evidence="2">14.58 umol/min/mg enzyme toward leucine (with 10 mM alpha-ketoglutarate)</Vmax>
        <Vmax evidence="2">16.61 umol/min/mg enzyme toward isoleucine (with 10 mM alpha-ketoglutarate)</Vmax>
    </kinetics>
</comment>
<comment type="pathway">
    <text>Amino-acid biosynthesis; L-isoleucine biosynthesis; L-isoleucine from 2-oxobutanoate: step 4/4.</text>
</comment>
<comment type="pathway">
    <text>Amino-acid biosynthesis; L-leucine biosynthesis; L-leucine from 3-methyl-2-oxobutanoate: step 4/4.</text>
</comment>
<comment type="pathway">
    <text>Amino-acid biosynthesis; L-valine biosynthesis; L-valine from pyruvate: step 4/4.</text>
</comment>
<comment type="similarity">
    <text evidence="3">Belongs to the class-IV pyridoxal-phosphate-dependent aminotransferase family.</text>
</comment>